<gene>
    <name evidence="1" type="primary">trpD</name>
    <name type="ordered locus">ELI_06510</name>
</gene>
<sequence length="330" mass="34677">MKTLPLAVPHMSQDEAEEVFGWILDGEASEEEIARFLLAMTERSETADEIAGAARALRDRLIPVEAPEGAVDCCGTGGDGHHTLNVSTAVSLVVAAAGVPVAKHGNRAASSKSGAADTLEALGLDMEAVGRTAEKTLAEIGICFLFAKNHHPAMGRIQPIRQRLGKRTIFNLMGPLSNPAGVKRQLIGIARPGYVPIYAEAKAKLGTERTYIVSGDEGLDELSLAGGNELADVCGNEFEMRRVYAEMIGLPHAPVEAIRGGDAAHNAMALKALLEGTPGPYRDAVVFNAAATLMAAGAVEDWEVGAAMAVESLDSGKANELLGKWIEMAV</sequence>
<accession>Q2NA97</accession>
<name>TRPD_ERYLH</name>
<feature type="chain" id="PRO_0000325423" description="Anthranilate phosphoribosyltransferase">
    <location>
        <begin position="1"/>
        <end position="330"/>
    </location>
</feature>
<feature type="binding site" evidence="1">
    <location>
        <position position="75"/>
    </location>
    <ligand>
        <name>5-phospho-alpha-D-ribose 1-diphosphate</name>
        <dbReference type="ChEBI" id="CHEBI:58017"/>
    </ligand>
</feature>
<feature type="binding site" evidence="1">
    <location>
        <position position="75"/>
    </location>
    <ligand>
        <name>anthranilate</name>
        <dbReference type="ChEBI" id="CHEBI:16567"/>
        <label>1</label>
    </ligand>
</feature>
<feature type="binding site" evidence="1">
    <location>
        <begin position="78"/>
        <end position="79"/>
    </location>
    <ligand>
        <name>5-phospho-alpha-D-ribose 1-diphosphate</name>
        <dbReference type="ChEBI" id="CHEBI:58017"/>
    </ligand>
</feature>
<feature type="binding site" evidence="1">
    <location>
        <position position="83"/>
    </location>
    <ligand>
        <name>5-phospho-alpha-D-ribose 1-diphosphate</name>
        <dbReference type="ChEBI" id="CHEBI:58017"/>
    </ligand>
</feature>
<feature type="binding site" evidence="1">
    <location>
        <begin position="85"/>
        <end position="88"/>
    </location>
    <ligand>
        <name>5-phospho-alpha-D-ribose 1-diphosphate</name>
        <dbReference type="ChEBI" id="CHEBI:58017"/>
    </ligand>
</feature>
<feature type="binding site" evidence="1">
    <location>
        <position position="87"/>
    </location>
    <ligand>
        <name>Mg(2+)</name>
        <dbReference type="ChEBI" id="CHEBI:18420"/>
        <label>1</label>
    </ligand>
</feature>
<feature type="binding site" evidence="1">
    <location>
        <begin position="103"/>
        <end position="111"/>
    </location>
    <ligand>
        <name>5-phospho-alpha-D-ribose 1-diphosphate</name>
        <dbReference type="ChEBI" id="CHEBI:58017"/>
    </ligand>
</feature>
<feature type="binding site" evidence="1">
    <location>
        <position position="106"/>
    </location>
    <ligand>
        <name>anthranilate</name>
        <dbReference type="ChEBI" id="CHEBI:16567"/>
        <label>1</label>
    </ligand>
</feature>
<feature type="binding site" evidence="1">
    <location>
        <position position="115"/>
    </location>
    <ligand>
        <name>5-phospho-alpha-D-ribose 1-diphosphate</name>
        <dbReference type="ChEBI" id="CHEBI:58017"/>
    </ligand>
</feature>
<feature type="binding site" evidence="1">
    <location>
        <position position="161"/>
    </location>
    <ligand>
        <name>anthranilate</name>
        <dbReference type="ChEBI" id="CHEBI:16567"/>
        <label>2</label>
    </ligand>
</feature>
<feature type="binding site" evidence="1">
    <location>
        <position position="220"/>
    </location>
    <ligand>
        <name>Mg(2+)</name>
        <dbReference type="ChEBI" id="CHEBI:18420"/>
        <label>2</label>
    </ligand>
</feature>
<feature type="binding site" evidence="1">
    <location>
        <position position="221"/>
    </location>
    <ligand>
        <name>Mg(2+)</name>
        <dbReference type="ChEBI" id="CHEBI:18420"/>
        <label>1</label>
    </ligand>
</feature>
<feature type="binding site" evidence="1">
    <location>
        <position position="221"/>
    </location>
    <ligand>
        <name>Mg(2+)</name>
        <dbReference type="ChEBI" id="CHEBI:18420"/>
        <label>2</label>
    </ligand>
</feature>
<dbReference type="EC" id="2.4.2.18" evidence="1"/>
<dbReference type="EMBL" id="CP000157">
    <property type="protein sequence ID" value="ABC63394.1"/>
    <property type="molecule type" value="Genomic_DNA"/>
</dbReference>
<dbReference type="RefSeq" id="WP_011414230.1">
    <property type="nucleotide sequence ID" value="NC_007722.1"/>
</dbReference>
<dbReference type="SMR" id="Q2NA97"/>
<dbReference type="STRING" id="314225.ELI_06510"/>
<dbReference type="KEGG" id="eli:ELI_06510"/>
<dbReference type="eggNOG" id="COG0547">
    <property type="taxonomic scope" value="Bacteria"/>
</dbReference>
<dbReference type="HOGENOM" id="CLU_034315_2_1_5"/>
<dbReference type="OrthoDB" id="9806430at2"/>
<dbReference type="UniPathway" id="UPA00035">
    <property type="reaction ID" value="UER00041"/>
</dbReference>
<dbReference type="Proteomes" id="UP000008808">
    <property type="component" value="Chromosome"/>
</dbReference>
<dbReference type="GO" id="GO:0005829">
    <property type="term" value="C:cytosol"/>
    <property type="evidence" value="ECO:0007669"/>
    <property type="project" value="TreeGrafter"/>
</dbReference>
<dbReference type="GO" id="GO:0004048">
    <property type="term" value="F:anthranilate phosphoribosyltransferase activity"/>
    <property type="evidence" value="ECO:0007669"/>
    <property type="project" value="UniProtKB-UniRule"/>
</dbReference>
<dbReference type="GO" id="GO:0000287">
    <property type="term" value="F:magnesium ion binding"/>
    <property type="evidence" value="ECO:0007669"/>
    <property type="project" value="UniProtKB-UniRule"/>
</dbReference>
<dbReference type="GO" id="GO:0000162">
    <property type="term" value="P:L-tryptophan biosynthetic process"/>
    <property type="evidence" value="ECO:0007669"/>
    <property type="project" value="UniProtKB-UniRule"/>
</dbReference>
<dbReference type="FunFam" id="3.40.1030.10:FF:000002">
    <property type="entry name" value="Anthranilate phosphoribosyltransferase"/>
    <property type="match status" value="1"/>
</dbReference>
<dbReference type="Gene3D" id="3.40.1030.10">
    <property type="entry name" value="Nucleoside phosphorylase/phosphoribosyltransferase catalytic domain"/>
    <property type="match status" value="1"/>
</dbReference>
<dbReference type="Gene3D" id="1.20.970.10">
    <property type="entry name" value="Transferase, Pyrimidine Nucleoside Phosphorylase, Chain C"/>
    <property type="match status" value="1"/>
</dbReference>
<dbReference type="HAMAP" id="MF_00211">
    <property type="entry name" value="TrpD"/>
    <property type="match status" value="1"/>
</dbReference>
<dbReference type="InterPro" id="IPR005940">
    <property type="entry name" value="Anthranilate_Pribosyl_Tfrase"/>
</dbReference>
<dbReference type="InterPro" id="IPR000312">
    <property type="entry name" value="Glycosyl_Trfase_fam3"/>
</dbReference>
<dbReference type="InterPro" id="IPR017459">
    <property type="entry name" value="Glycosyl_Trfase_fam3_N_dom"/>
</dbReference>
<dbReference type="InterPro" id="IPR036320">
    <property type="entry name" value="Glycosyl_Trfase_fam3_N_dom_sf"/>
</dbReference>
<dbReference type="InterPro" id="IPR035902">
    <property type="entry name" value="Nuc_phospho_transferase"/>
</dbReference>
<dbReference type="NCBIfam" id="TIGR01245">
    <property type="entry name" value="trpD"/>
    <property type="match status" value="1"/>
</dbReference>
<dbReference type="PANTHER" id="PTHR43285">
    <property type="entry name" value="ANTHRANILATE PHOSPHORIBOSYLTRANSFERASE"/>
    <property type="match status" value="1"/>
</dbReference>
<dbReference type="PANTHER" id="PTHR43285:SF2">
    <property type="entry name" value="ANTHRANILATE PHOSPHORIBOSYLTRANSFERASE"/>
    <property type="match status" value="1"/>
</dbReference>
<dbReference type="Pfam" id="PF02885">
    <property type="entry name" value="Glycos_trans_3N"/>
    <property type="match status" value="1"/>
</dbReference>
<dbReference type="Pfam" id="PF00591">
    <property type="entry name" value="Glycos_transf_3"/>
    <property type="match status" value="1"/>
</dbReference>
<dbReference type="SUPFAM" id="SSF52418">
    <property type="entry name" value="Nucleoside phosphorylase/phosphoribosyltransferase catalytic domain"/>
    <property type="match status" value="1"/>
</dbReference>
<dbReference type="SUPFAM" id="SSF47648">
    <property type="entry name" value="Nucleoside phosphorylase/phosphoribosyltransferase N-terminal domain"/>
    <property type="match status" value="1"/>
</dbReference>
<organism>
    <name type="scientific">Erythrobacter litoralis (strain HTCC2594)</name>
    <dbReference type="NCBI Taxonomy" id="314225"/>
    <lineage>
        <taxon>Bacteria</taxon>
        <taxon>Pseudomonadati</taxon>
        <taxon>Pseudomonadota</taxon>
        <taxon>Alphaproteobacteria</taxon>
        <taxon>Sphingomonadales</taxon>
        <taxon>Erythrobacteraceae</taxon>
        <taxon>Erythrobacter/Porphyrobacter group</taxon>
        <taxon>Erythrobacter</taxon>
    </lineage>
</organism>
<evidence type="ECO:0000255" key="1">
    <source>
        <dbReference type="HAMAP-Rule" id="MF_00211"/>
    </source>
</evidence>
<keyword id="KW-0028">Amino-acid biosynthesis</keyword>
<keyword id="KW-0057">Aromatic amino acid biosynthesis</keyword>
<keyword id="KW-0328">Glycosyltransferase</keyword>
<keyword id="KW-0460">Magnesium</keyword>
<keyword id="KW-0479">Metal-binding</keyword>
<keyword id="KW-1185">Reference proteome</keyword>
<keyword id="KW-0808">Transferase</keyword>
<keyword id="KW-0822">Tryptophan biosynthesis</keyword>
<comment type="function">
    <text evidence="1">Catalyzes the transfer of the phosphoribosyl group of 5-phosphorylribose-1-pyrophosphate (PRPP) to anthranilate to yield N-(5'-phosphoribosyl)-anthranilate (PRA).</text>
</comment>
<comment type="catalytic activity">
    <reaction evidence="1">
        <text>N-(5-phospho-beta-D-ribosyl)anthranilate + diphosphate = 5-phospho-alpha-D-ribose 1-diphosphate + anthranilate</text>
        <dbReference type="Rhea" id="RHEA:11768"/>
        <dbReference type="ChEBI" id="CHEBI:16567"/>
        <dbReference type="ChEBI" id="CHEBI:18277"/>
        <dbReference type="ChEBI" id="CHEBI:33019"/>
        <dbReference type="ChEBI" id="CHEBI:58017"/>
        <dbReference type="EC" id="2.4.2.18"/>
    </reaction>
</comment>
<comment type="cofactor">
    <cofactor evidence="1">
        <name>Mg(2+)</name>
        <dbReference type="ChEBI" id="CHEBI:18420"/>
    </cofactor>
    <text evidence="1">Binds 2 magnesium ions per monomer.</text>
</comment>
<comment type="pathway">
    <text evidence="1">Amino-acid biosynthesis; L-tryptophan biosynthesis; L-tryptophan from chorismate: step 2/5.</text>
</comment>
<comment type="subunit">
    <text evidence="1">Homodimer.</text>
</comment>
<comment type="similarity">
    <text evidence="1">Belongs to the anthranilate phosphoribosyltransferase family.</text>
</comment>
<proteinExistence type="inferred from homology"/>
<reference key="1">
    <citation type="journal article" date="2009" name="J. Bacteriol.">
        <title>Complete genome sequence of Erythrobacter litoralis HTCC2594.</title>
        <authorList>
            <person name="Oh H.M."/>
            <person name="Giovannoni S.J."/>
            <person name="Ferriera S."/>
            <person name="Johnson J."/>
            <person name="Cho J.C."/>
        </authorList>
    </citation>
    <scope>NUCLEOTIDE SEQUENCE [LARGE SCALE GENOMIC DNA]</scope>
    <source>
        <strain>HTCC2594</strain>
    </source>
</reference>
<protein>
    <recommendedName>
        <fullName evidence="1">Anthranilate phosphoribosyltransferase</fullName>
        <ecNumber evidence="1">2.4.2.18</ecNumber>
    </recommendedName>
</protein>